<organism>
    <name type="scientific">Schizosaccharomyces pombe (strain 972 / ATCC 24843)</name>
    <name type="common">Fission yeast</name>
    <dbReference type="NCBI Taxonomy" id="284812"/>
    <lineage>
        <taxon>Eukaryota</taxon>
        <taxon>Fungi</taxon>
        <taxon>Dikarya</taxon>
        <taxon>Ascomycota</taxon>
        <taxon>Taphrinomycotina</taxon>
        <taxon>Schizosaccharomycetes</taxon>
        <taxon>Schizosaccharomycetales</taxon>
        <taxon>Schizosaccharomycetaceae</taxon>
        <taxon>Schizosaccharomyces</taxon>
    </lineage>
</organism>
<feature type="chain" id="PRO_0000124101" description="Probable proteasome subunit alpha type-7">
    <location>
        <begin position="1"/>
        <end position="253"/>
    </location>
</feature>
<feature type="modified residue" description="Phosphoserine" evidence="4">
    <location>
        <position position="104"/>
    </location>
</feature>
<keyword id="KW-0963">Cytoplasm</keyword>
<keyword id="KW-0539">Nucleus</keyword>
<keyword id="KW-0597">Phosphoprotein</keyword>
<keyword id="KW-0647">Proteasome</keyword>
<keyword id="KW-1185">Reference proteome</keyword>
<evidence type="ECO:0000250" key="1"/>
<evidence type="ECO:0000255" key="2">
    <source>
        <dbReference type="PROSITE-ProRule" id="PRU00808"/>
    </source>
</evidence>
<evidence type="ECO:0000269" key="3">
    <source>
    </source>
</evidence>
<evidence type="ECO:0000269" key="4">
    <source>
    </source>
</evidence>
<dbReference type="EMBL" id="CU329672">
    <property type="protein sequence ID" value="CAA18639.1"/>
    <property type="molecule type" value="Genomic_DNA"/>
</dbReference>
<dbReference type="PIR" id="T41139">
    <property type="entry name" value="T41139"/>
</dbReference>
<dbReference type="RefSeq" id="NP_588040.1">
    <property type="nucleotide sequence ID" value="NM_001023032.2"/>
</dbReference>
<dbReference type="SMR" id="O59770"/>
<dbReference type="BioGRID" id="275944">
    <property type="interactions" value="11"/>
</dbReference>
<dbReference type="ComplexPortal" id="CPX-9077">
    <property type="entry name" value="26S proteasome complex"/>
</dbReference>
<dbReference type="FunCoup" id="O59770">
    <property type="interactions" value="795"/>
</dbReference>
<dbReference type="STRING" id="284812.O59770"/>
<dbReference type="MEROPS" id="T01.977"/>
<dbReference type="iPTMnet" id="O59770"/>
<dbReference type="PaxDb" id="4896-SPCC1795.04c.1"/>
<dbReference type="EnsemblFungi" id="SPCC1795.04c.1">
    <property type="protein sequence ID" value="SPCC1795.04c.1:pep"/>
    <property type="gene ID" value="SPCC1795.04c"/>
</dbReference>
<dbReference type="GeneID" id="2539378"/>
<dbReference type="KEGG" id="spo:2539378"/>
<dbReference type="PomBase" id="SPCC1795.04c">
    <property type="gene designation" value="pre10"/>
</dbReference>
<dbReference type="VEuPathDB" id="FungiDB:SPCC1795.04c"/>
<dbReference type="eggNOG" id="KOG0184">
    <property type="taxonomic scope" value="Eukaryota"/>
</dbReference>
<dbReference type="HOGENOM" id="CLU_035750_0_0_1"/>
<dbReference type="InParanoid" id="O59770"/>
<dbReference type="OMA" id="RVSMYMH"/>
<dbReference type="PhylomeDB" id="O59770"/>
<dbReference type="Reactome" id="R-SPO-1236978">
    <property type="pathway name" value="Cross-presentation of soluble exogenous antigens (endosomes)"/>
</dbReference>
<dbReference type="Reactome" id="R-SPO-350562">
    <property type="pathway name" value="Regulation of ornithine decarboxylase (ODC)"/>
</dbReference>
<dbReference type="Reactome" id="R-SPO-5687128">
    <property type="pathway name" value="MAPK6/MAPK4 signaling"/>
</dbReference>
<dbReference type="Reactome" id="R-SPO-5689603">
    <property type="pathway name" value="UCH proteinases"/>
</dbReference>
<dbReference type="Reactome" id="R-SPO-5689880">
    <property type="pathway name" value="Ub-specific processing proteases"/>
</dbReference>
<dbReference type="Reactome" id="R-SPO-68949">
    <property type="pathway name" value="Orc1 removal from chromatin"/>
</dbReference>
<dbReference type="Reactome" id="R-SPO-69017">
    <property type="pathway name" value="CDK-mediated phosphorylation and removal of Cdc6"/>
</dbReference>
<dbReference type="Reactome" id="R-SPO-69601">
    <property type="pathway name" value="Ubiquitin Mediated Degradation of Phosphorylated Cdc25A"/>
</dbReference>
<dbReference type="Reactome" id="R-SPO-75815">
    <property type="pathway name" value="Ubiquitin-dependent degradation of Cyclin D"/>
</dbReference>
<dbReference type="Reactome" id="R-SPO-8854050">
    <property type="pathway name" value="FBXL7 down-regulates AURKA during mitotic entry and in early mitosis"/>
</dbReference>
<dbReference type="Reactome" id="R-SPO-8948751">
    <property type="pathway name" value="Regulation of PTEN stability and activity"/>
</dbReference>
<dbReference type="Reactome" id="R-SPO-8951664">
    <property type="pathway name" value="Neddylation"/>
</dbReference>
<dbReference type="Reactome" id="R-SPO-9755511">
    <property type="pathway name" value="KEAP1-NFE2L2 pathway"/>
</dbReference>
<dbReference type="Reactome" id="R-SPO-983168">
    <property type="pathway name" value="Antigen processing: Ubiquitination &amp; Proteasome degradation"/>
</dbReference>
<dbReference type="Reactome" id="R-SPO-9907900">
    <property type="pathway name" value="Proteasome assembly"/>
</dbReference>
<dbReference type="PRO" id="PR:O59770"/>
<dbReference type="Proteomes" id="UP000002485">
    <property type="component" value="Chromosome III"/>
</dbReference>
<dbReference type="GO" id="GO:0005829">
    <property type="term" value="C:cytosol"/>
    <property type="evidence" value="ECO:0007005"/>
    <property type="project" value="PomBase"/>
</dbReference>
<dbReference type="GO" id="GO:0005634">
    <property type="term" value="C:nucleus"/>
    <property type="evidence" value="ECO:0007005"/>
    <property type="project" value="PomBase"/>
</dbReference>
<dbReference type="GO" id="GO:0019773">
    <property type="term" value="C:proteasome core complex, alpha-subunit complex"/>
    <property type="evidence" value="ECO:0000314"/>
    <property type="project" value="PomBase"/>
</dbReference>
<dbReference type="GO" id="GO:0043161">
    <property type="term" value="P:proteasome-mediated ubiquitin-dependent protein catabolic process"/>
    <property type="evidence" value="ECO:0000318"/>
    <property type="project" value="GO_Central"/>
</dbReference>
<dbReference type="CDD" id="cd03751">
    <property type="entry name" value="proteasome_alpha_type_3"/>
    <property type="match status" value="1"/>
</dbReference>
<dbReference type="FunFam" id="3.60.20.10:FF:000007">
    <property type="entry name" value="Proteasome subunit alpha type"/>
    <property type="match status" value="1"/>
</dbReference>
<dbReference type="Gene3D" id="3.60.20.10">
    <property type="entry name" value="Glutamine Phosphoribosylpyrophosphate, subunit 1, domain 1"/>
    <property type="match status" value="1"/>
</dbReference>
<dbReference type="InterPro" id="IPR029055">
    <property type="entry name" value="Ntn_hydrolases_N"/>
</dbReference>
<dbReference type="InterPro" id="IPR050115">
    <property type="entry name" value="Proteasome_alpha"/>
</dbReference>
<dbReference type="InterPro" id="IPR023332">
    <property type="entry name" value="Proteasome_alpha-type"/>
</dbReference>
<dbReference type="InterPro" id="IPR000426">
    <property type="entry name" value="Proteasome_asu_N"/>
</dbReference>
<dbReference type="InterPro" id="IPR001353">
    <property type="entry name" value="Proteasome_sua/b"/>
</dbReference>
<dbReference type="PANTHER" id="PTHR11599">
    <property type="entry name" value="PROTEASOME SUBUNIT ALPHA/BETA"/>
    <property type="match status" value="1"/>
</dbReference>
<dbReference type="Pfam" id="PF00227">
    <property type="entry name" value="Proteasome"/>
    <property type="match status" value="1"/>
</dbReference>
<dbReference type="Pfam" id="PF10584">
    <property type="entry name" value="Proteasome_A_N"/>
    <property type="match status" value="1"/>
</dbReference>
<dbReference type="SMART" id="SM00948">
    <property type="entry name" value="Proteasome_A_N"/>
    <property type="match status" value="1"/>
</dbReference>
<dbReference type="SUPFAM" id="SSF56235">
    <property type="entry name" value="N-terminal nucleophile aminohydrolases (Ntn hydrolases)"/>
    <property type="match status" value="1"/>
</dbReference>
<dbReference type="PROSITE" id="PS00388">
    <property type="entry name" value="PROTEASOME_ALPHA_1"/>
    <property type="match status" value="1"/>
</dbReference>
<dbReference type="PROSITE" id="PS51475">
    <property type="entry name" value="PROTEASOME_ALPHA_2"/>
    <property type="match status" value="1"/>
</dbReference>
<gene>
    <name type="primary">pre10</name>
    <name type="ORF">SPCC1795.04c</name>
</gene>
<sequence>MSSIGTGYDLGLFFSPDGRLFQAEYAYKAVENASTCIGIKCEDGVILALEKVVTSKLLKPRVNNRIGSVDRHIGIATTGFIPDGQHIVKRARDEATSWRDNYGSPIPGTVIADRLGNYVQLFTCYSSVRPFGVMSFVATYDSEGPHLYMVEPNGVYWGYNGAAAGKGRQVARNELEKLNFSSLKMKDAVKEAARILYATHDEENNKEHEIEMTWVGVETNGIHTPVPDELLQEAEAYARRIADGEEEDIAMQE</sequence>
<accession>O59770</accession>
<name>PSA7_SCHPO</name>
<proteinExistence type="evidence at protein level"/>
<protein>
    <recommendedName>
        <fullName>Probable proteasome subunit alpha type-7</fullName>
    </recommendedName>
</protein>
<comment type="function">
    <text evidence="1">The proteasome is a multicatalytic proteinase complex which is characterized by its ability to cleave peptides with Arg, Phe, Tyr, Leu, and Glu adjacent to the leaving group at neutral or slightly basic pH. The proteasome has an ATP-dependent proteolytic activity (By similarity).</text>
</comment>
<comment type="subunit">
    <text evidence="1">The 26S proteasome consists of a 20S proteasome core and two 19S regulatory subunits. The 20S proteasome core is composed of 28 subunits that are arranged in four stacked rings, resulting in a barrel-shaped structure. The two end rings are each formed by seven alpha subunits, and the two central rings are each formed by seven beta subunits. The catalytic chamber with the active sites is on the inside of the barrel (By similarity).</text>
</comment>
<comment type="subcellular location">
    <subcellularLocation>
        <location evidence="3">Cytoplasm</location>
    </subcellularLocation>
    <subcellularLocation>
        <location evidence="3">Nucleus</location>
    </subcellularLocation>
</comment>
<comment type="similarity">
    <text evidence="2">Belongs to the peptidase T1A family.</text>
</comment>
<reference key="1">
    <citation type="journal article" date="2002" name="Nature">
        <title>The genome sequence of Schizosaccharomyces pombe.</title>
        <authorList>
            <person name="Wood V."/>
            <person name="Gwilliam R."/>
            <person name="Rajandream M.A."/>
            <person name="Lyne M.H."/>
            <person name="Lyne R."/>
            <person name="Stewart A."/>
            <person name="Sgouros J.G."/>
            <person name="Peat N."/>
            <person name="Hayles J."/>
            <person name="Baker S.G."/>
            <person name="Basham D."/>
            <person name="Bowman S."/>
            <person name="Brooks K."/>
            <person name="Brown D."/>
            <person name="Brown S."/>
            <person name="Chillingworth T."/>
            <person name="Churcher C.M."/>
            <person name="Collins M."/>
            <person name="Connor R."/>
            <person name="Cronin A."/>
            <person name="Davis P."/>
            <person name="Feltwell T."/>
            <person name="Fraser A."/>
            <person name="Gentles S."/>
            <person name="Goble A."/>
            <person name="Hamlin N."/>
            <person name="Harris D.E."/>
            <person name="Hidalgo J."/>
            <person name="Hodgson G."/>
            <person name="Holroyd S."/>
            <person name="Hornsby T."/>
            <person name="Howarth S."/>
            <person name="Huckle E.J."/>
            <person name="Hunt S."/>
            <person name="Jagels K."/>
            <person name="James K.D."/>
            <person name="Jones L."/>
            <person name="Jones M."/>
            <person name="Leather S."/>
            <person name="McDonald S."/>
            <person name="McLean J."/>
            <person name="Mooney P."/>
            <person name="Moule S."/>
            <person name="Mungall K.L."/>
            <person name="Murphy L.D."/>
            <person name="Niblett D."/>
            <person name="Odell C."/>
            <person name="Oliver K."/>
            <person name="O'Neil S."/>
            <person name="Pearson D."/>
            <person name="Quail M.A."/>
            <person name="Rabbinowitsch E."/>
            <person name="Rutherford K.M."/>
            <person name="Rutter S."/>
            <person name="Saunders D."/>
            <person name="Seeger K."/>
            <person name="Sharp S."/>
            <person name="Skelton J."/>
            <person name="Simmonds M.N."/>
            <person name="Squares R."/>
            <person name="Squares S."/>
            <person name="Stevens K."/>
            <person name="Taylor K."/>
            <person name="Taylor R.G."/>
            <person name="Tivey A."/>
            <person name="Walsh S.V."/>
            <person name="Warren T."/>
            <person name="Whitehead S."/>
            <person name="Woodward J.R."/>
            <person name="Volckaert G."/>
            <person name="Aert R."/>
            <person name="Robben J."/>
            <person name="Grymonprez B."/>
            <person name="Weltjens I."/>
            <person name="Vanstreels E."/>
            <person name="Rieger M."/>
            <person name="Schaefer M."/>
            <person name="Mueller-Auer S."/>
            <person name="Gabel C."/>
            <person name="Fuchs M."/>
            <person name="Duesterhoeft A."/>
            <person name="Fritzc C."/>
            <person name="Holzer E."/>
            <person name="Moestl D."/>
            <person name="Hilbert H."/>
            <person name="Borzym K."/>
            <person name="Langer I."/>
            <person name="Beck A."/>
            <person name="Lehrach H."/>
            <person name="Reinhardt R."/>
            <person name="Pohl T.M."/>
            <person name="Eger P."/>
            <person name="Zimmermann W."/>
            <person name="Wedler H."/>
            <person name="Wambutt R."/>
            <person name="Purnelle B."/>
            <person name="Goffeau A."/>
            <person name="Cadieu E."/>
            <person name="Dreano S."/>
            <person name="Gloux S."/>
            <person name="Lelaure V."/>
            <person name="Mottier S."/>
            <person name="Galibert F."/>
            <person name="Aves S.J."/>
            <person name="Xiang Z."/>
            <person name="Hunt C."/>
            <person name="Moore K."/>
            <person name="Hurst S.M."/>
            <person name="Lucas M."/>
            <person name="Rochet M."/>
            <person name="Gaillardin C."/>
            <person name="Tallada V.A."/>
            <person name="Garzon A."/>
            <person name="Thode G."/>
            <person name="Daga R.R."/>
            <person name="Cruzado L."/>
            <person name="Jimenez J."/>
            <person name="Sanchez M."/>
            <person name="del Rey F."/>
            <person name="Benito J."/>
            <person name="Dominguez A."/>
            <person name="Revuelta J.L."/>
            <person name="Moreno S."/>
            <person name="Armstrong J."/>
            <person name="Forsburg S.L."/>
            <person name="Cerutti L."/>
            <person name="Lowe T."/>
            <person name="McCombie W.R."/>
            <person name="Paulsen I."/>
            <person name="Potashkin J."/>
            <person name="Shpakovski G.V."/>
            <person name="Ussery D."/>
            <person name="Barrell B.G."/>
            <person name="Nurse P."/>
        </authorList>
    </citation>
    <scope>NUCLEOTIDE SEQUENCE [LARGE SCALE GENOMIC DNA]</scope>
    <source>
        <strain>972 / ATCC 24843</strain>
    </source>
</reference>
<reference key="2">
    <citation type="journal article" date="2006" name="Nat. Biotechnol.">
        <title>ORFeome cloning and global analysis of protein localization in the fission yeast Schizosaccharomyces pombe.</title>
        <authorList>
            <person name="Matsuyama A."/>
            <person name="Arai R."/>
            <person name="Yashiroda Y."/>
            <person name="Shirai A."/>
            <person name="Kamata A."/>
            <person name="Sekido S."/>
            <person name="Kobayashi Y."/>
            <person name="Hashimoto A."/>
            <person name="Hamamoto M."/>
            <person name="Hiraoka Y."/>
            <person name="Horinouchi S."/>
            <person name="Yoshida M."/>
        </authorList>
    </citation>
    <scope>SUBCELLULAR LOCATION [LARGE SCALE ANALYSIS]</scope>
</reference>
<reference key="3">
    <citation type="journal article" date="2008" name="J. Proteome Res.">
        <title>Phosphoproteome analysis of fission yeast.</title>
        <authorList>
            <person name="Wilson-Grady J.T."/>
            <person name="Villen J."/>
            <person name="Gygi S.P."/>
        </authorList>
    </citation>
    <scope>PHOSPHORYLATION [LARGE SCALE ANALYSIS] AT SER-104</scope>
    <scope>IDENTIFICATION BY MASS SPECTROMETRY</scope>
</reference>